<proteinExistence type="inferred from homology"/>
<reference key="1">
    <citation type="journal article" date="2009" name="J. Bacteriol.">
        <title>Role of conjugative elements in the evolution of the multidrug-resistant pandemic clone Streptococcus pneumoniae Spain23F ST81.</title>
        <authorList>
            <person name="Croucher N.J."/>
            <person name="Walker D."/>
            <person name="Romero P."/>
            <person name="Lennard N."/>
            <person name="Paterson G.K."/>
            <person name="Bason N.C."/>
            <person name="Mitchell A.M."/>
            <person name="Quail M.A."/>
            <person name="Andrew P.W."/>
            <person name="Parkhill J."/>
            <person name="Bentley S.D."/>
            <person name="Mitchell T.J."/>
        </authorList>
    </citation>
    <scope>NUCLEOTIDE SEQUENCE [LARGE SCALE GENOMIC DNA]</scope>
    <source>
        <strain>ATCC 700669 / Spain 23F-1</strain>
    </source>
</reference>
<protein>
    <recommendedName>
        <fullName evidence="1">UDP-N-acetylmuramoylalanine--D-glutamate ligase</fullName>
        <ecNumber evidence="1">6.3.2.9</ecNumber>
    </recommendedName>
    <alternativeName>
        <fullName evidence="1">D-glutamic acid-adding enzyme</fullName>
    </alternativeName>
    <alternativeName>
        <fullName evidence="1">UDP-N-acetylmuramoyl-L-alanyl-D-glutamate synthetase</fullName>
    </alternativeName>
</protein>
<keyword id="KW-0067">ATP-binding</keyword>
<keyword id="KW-0131">Cell cycle</keyword>
<keyword id="KW-0132">Cell division</keyword>
<keyword id="KW-0133">Cell shape</keyword>
<keyword id="KW-0961">Cell wall biogenesis/degradation</keyword>
<keyword id="KW-0963">Cytoplasm</keyword>
<keyword id="KW-0436">Ligase</keyword>
<keyword id="KW-0547">Nucleotide-binding</keyword>
<keyword id="KW-0573">Peptidoglycan synthesis</keyword>
<sequence>MKVIDQFKNKKVLVLGLAKSGESAARLLDKLGAIVTVNDGKPFEDNPAAQCLLEEGIKVITGGHPLELLDEEFALMVKNPGIPYSNPMIEKALAKGIPVLTEVELAYLISEAPIIGITGSNGKTTTTTMIGEVLTAAGQHGLLSGNIGYPASQVAQIASDKDTLVMELSSFQLMGVQEFHPEIAVITNLMPTHIDYHGSFSEYVAAKWNIQNKMTAADFLVLNFNQDLAKDLTSKTEATVVPFSTLEKVDGAYLEDGQLYFRGEVVMAANEIGVPGSHNVENALATIAVAKLRDVDNQTIKETLSAFGGVKHRLQFVDDIKGVKFYNDSKSTNILATQKALSGFDNSKVVLIAGGLDRGNEFDELVPDITGLKKMVILGQSAERVKRAADKAGVAYVEATDIADATRKAYELATQGDVVLLSPANASWDMYANFEVRGDLFIDTVAELKE</sequence>
<gene>
    <name evidence="1" type="primary">murD</name>
    <name type="ordered locus">SPN23F06220</name>
</gene>
<organism>
    <name type="scientific">Streptococcus pneumoniae (strain ATCC 700669 / Spain 23F-1)</name>
    <dbReference type="NCBI Taxonomy" id="561276"/>
    <lineage>
        <taxon>Bacteria</taxon>
        <taxon>Bacillati</taxon>
        <taxon>Bacillota</taxon>
        <taxon>Bacilli</taxon>
        <taxon>Lactobacillales</taxon>
        <taxon>Streptococcaceae</taxon>
        <taxon>Streptococcus</taxon>
    </lineage>
</organism>
<feature type="chain" id="PRO_1000147414" description="UDP-N-acetylmuramoylalanine--D-glutamate ligase">
    <location>
        <begin position="1"/>
        <end position="450"/>
    </location>
</feature>
<feature type="binding site" evidence="1">
    <location>
        <begin position="119"/>
        <end position="125"/>
    </location>
    <ligand>
        <name>ATP</name>
        <dbReference type="ChEBI" id="CHEBI:30616"/>
    </ligand>
</feature>
<dbReference type="EC" id="6.3.2.9" evidence="1"/>
<dbReference type="EMBL" id="FM211187">
    <property type="protein sequence ID" value="CAR68471.1"/>
    <property type="molecule type" value="Genomic_DNA"/>
</dbReference>
<dbReference type="RefSeq" id="WP_000863025.1">
    <property type="nucleotide sequence ID" value="NC_011900.1"/>
</dbReference>
<dbReference type="SMR" id="B8ZMZ6"/>
<dbReference type="KEGG" id="sne:SPN23F06220"/>
<dbReference type="HOGENOM" id="CLU_032540_0_1_9"/>
<dbReference type="UniPathway" id="UPA00219"/>
<dbReference type="GO" id="GO:0005737">
    <property type="term" value="C:cytoplasm"/>
    <property type="evidence" value="ECO:0007669"/>
    <property type="project" value="UniProtKB-SubCell"/>
</dbReference>
<dbReference type="GO" id="GO:0005524">
    <property type="term" value="F:ATP binding"/>
    <property type="evidence" value="ECO:0007669"/>
    <property type="project" value="UniProtKB-UniRule"/>
</dbReference>
<dbReference type="GO" id="GO:0008764">
    <property type="term" value="F:UDP-N-acetylmuramoylalanine-D-glutamate ligase activity"/>
    <property type="evidence" value="ECO:0007669"/>
    <property type="project" value="UniProtKB-UniRule"/>
</dbReference>
<dbReference type="GO" id="GO:0051301">
    <property type="term" value="P:cell division"/>
    <property type="evidence" value="ECO:0007669"/>
    <property type="project" value="UniProtKB-KW"/>
</dbReference>
<dbReference type="GO" id="GO:0071555">
    <property type="term" value="P:cell wall organization"/>
    <property type="evidence" value="ECO:0007669"/>
    <property type="project" value="UniProtKB-KW"/>
</dbReference>
<dbReference type="GO" id="GO:0009252">
    <property type="term" value="P:peptidoglycan biosynthetic process"/>
    <property type="evidence" value="ECO:0007669"/>
    <property type="project" value="UniProtKB-UniRule"/>
</dbReference>
<dbReference type="GO" id="GO:0008360">
    <property type="term" value="P:regulation of cell shape"/>
    <property type="evidence" value="ECO:0007669"/>
    <property type="project" value="UniProtKB-KW"/>
</dbReference>
<dbReference type="Gene3D" id="3.90.190.20">
    <property type="entry name" value="Mur ligase, C-terminal domain"/>
    <property type="match status" value="1"/>
</dbReference>
<dbReference type="Gene3D" id="3.40.1190.10">
    <property type="entry name" value="Mur-like, catalytic domain"/>
    <property type="match status" value="1"/>
</dbReference>
<dbReference type="Gene3D" id="3.40.50.720">
    <property type="entry name" value="NAD(P)-binding Rossmann-like Domain"/>
    <property type="match status" value="1"/>
</dbReference>
<dbReference type="HAMAP" id="MF_00639">
    <property type="entry name" value="MurD"/>
    <property type="match status" value="1"/>
</dbReference>
<dbReference type="InterPro" id="IPR036565">
    <property type="entry name" value="Mur-like_cat_sf"/>
</dbReference>
<dbReference type="InterPro" id="IPR004101">
    <property type="entry name" value="Mur_ligase_C"/>
</dbReference>
<dbReference type="InterPro" id="IPR036615">
    <property type="entry name" value="Mur_ligase_C_dom_sf"/>
</dbReference>
<dbReference type="InterPro" id="IPR013221">
    <property type="entry name" value="Mur_ligase_cen"/>
</dbReference>
<dbReference type="InterPro" id="IPR005762">
    <property type="entry name" value="MurD"/>
</dbReference>
<dbReference type="NCBIfam" id="TIGR01087">
    <property type="entry name" value="murD"/>
    <property type="match status" value="1"/>
</dbReference>
<dbReference type="PANTHER" id="PTHR43692">
    <property type="entry name" value="UDP-N-ACETYLMURAMOYLALANINE--D-GLUTAMATE LIGASE"/>
    <property type="match status" value="1"/>
</dbReference>
<dbReference type="PANTHER" id="PTHR43692:SF1">
    <property type="entry name" value="UDP-N-ACETYLMURAMOYLALANINE--D-GLUTAMATE LIGASE"/>
    <property type="match status" value="1"/>
</dbReference>
<dbReference type="Pfam" id="PF02875">
    <property type="entry name" value="Mur_ligase_C"/>
    <property type="match status" value="1"/>
</dbReference>
<dbReference type="Pfam" id="PF08245">
    <property type="entry name" value="Mur_ligase_M"/>
    <property type="match status" value="1"/>
</dbReference>
<dbReference type="Pfam" id="PF21799">
    <property type="entry name" value="MurD-like_N"/>
    <property type="match status" value="1"/>
</dbReference>
<dbReference type="SUPFAM" id="SSF51984">
    <property type="entry name" value="MurCD N-terminal domain"/>
    <property type="match status" value="1"/>
</dbReference>
<dbReference type="SUPFAM" id="SSF53623">
    <property type="entry name" value="MurD-like peptide ligases, catalytic domain"/>
    <property type="match status" value="1"/>
</dbReference>
<dbReference type="SUPFAM" id="SSF53244">
    <property type="entry name" value="MurD-like peptide ligases, peptide-binding domain"/>
    <property type="match status" value="1"/>
</dbReference>
<name>MURD_STRPJ</name>
<evidence type="ECO:0000255" key="1">
    <source>
        <dbReference type="HAMAP-Rule" id="MF_00639"/>
    </source>
</evidence>
<accession>B8ZMZ6</accession>
<comment type="function">
    <text evidence="1">Cell wall formation. Catalyzes the addition of glutamate to the nucleotide precursor UDP-N-acetylmuramoyl-L-alanine (UMA).</text>
</comment>
<comment type="catalytic activity">
    <reaction evidence="1">
        <text>UDP-N-acetyl-alpha-D-muramoyl-L-alanine + D-glutamate + ATP = UDP-N-acetyl-alpha-D-muramoyl-L-alanyl-D-glutamate + ADP + phosphate + H(+)</text>
        <dbReference type="Rhea" id="RHEA:16429"/>
        <dbReference type="ChEBI" id="CHEBI:15378"/>
        <dbReference type="ChEBI" id="CHEBI:29986"/>
        <dbReference type="ChEBI" id="CHEBI:30616"/>
        <dbReference type="ChEBI" id="CHEBI:43474"/>
        <dbReference type="ChEBI" id="CHEBI:83898"/>
        <dbReference type="ChEBI" id="CHEBI:83900"/>
        <dbReference type="ChEBI" id="CHEBI:456216"/>
        <dbReference type="EC" id="6.3.2.9"/>
    </reaction>
</comment>
<comment type="pathway">
    <text evidence="1">Cell wall biogenesis; peptidoglycan biosynthesis.</text>
</comment>
<comment type="subcellular location">
    <subcellularLocation>
        <location evidence="1">Cytoplasm</location>
    </subcellularLocation>
</comment>
<comment type="similarity">
    <text evidence="1">Belongs to the MurCDEF family.</text>
</comment>